<comment type="function">
    <text evidence="3">Capsid protein self-assembles to form an icosahedral capsid with a T=3 symmetry, about 30 nm in diameter, and consisting of 180 capsid proteins. Each icosahedral unit contains three protein subunits (Potential).</text>
</comment>
<comment type="subcellular location">
    <subcellularLocation>
        <location evidence="3">Virion</location>
    </subcellularLocation>
</comment>
<comment type="similarity">
    <text evidence="3">Belongs to the icosahedral plant coat protein family.</text>
</comment>
<organism>
    <name type="scientific">Southern bean mosaic virus (isolate Bean/United States/Arkansas)</name>
    <name type="common">SBMV</name>
    <dbReference type="NCBI Taxonomy" id="652938"/>
    <lineage>
        <taxon>Viruses</taxon>
        <taxon>Riboviria</taxon>
        <taxon>Orthornavirae</taxon>
        <taxon>Pisuviricota</taxon>
        <taxon>Pisoniviricetes</taxon>
        <taxon>Sobelivirales</taxon>
        <taxon>Solemoviridae</taxon>
        <taxon>Sobemovirus</taxon>
        <taxon>Southern bean mosaic virus</taxon>
    </lineage>
</organism>
<feature type="chain" id="PRO_0000402467" description="Capsid protein">
    <location>
        <begin position="1"/>
        <end position="266"/>
    </location>
</feature>
<feature type="region of interest" description="R domain, interaction with RNA" evidence="1">
    <location>
        <begin position="2"/>
        <end position="71"/>
    </location>
</feature>
<feature type="region of interest" description="Disordered" evidence="2">
    <location>
        <begin position="13"/>
        <end position="51"/>
    </location>
</feature>
<feature type="region of interest" description="S domain, virion shell" evidence="1">
    <location>
        <begin position="72"/>
        <end position="257"/>
    </location>
</feature>
<feature type="region of interest" description="P domain, projecting" evidence="1">
    <location>
        <begin position="258"/>
        <end position="266"/>
    </location>
</feature>
<feature type="compositionally biased region" description="Basic residues" evidence="2">
    <location>
        <begin position="26"/>
        <end position="37"/>
    </location>
</feature>
<feature type="disulfide bond" evidence="1">
    <location>
        <begin position="175"/>
        <end position="182"/>
    </location>
</feature>
<sequence length="266" mass="28771">MAKRLTKQQLTKAIANTLEAPATQSRRPRNRRRRRSAARQPQSTQAGVSMAPIAQGTMVRLREPSLRTAGGVTVLTHSELSTELSVTNAIVITSELVMPYTMGTWLRGVAANWSKYSLLSVRYTYLPSCPSTTSGSIHMGFQYDMADTLPVSVNQLSNLRGYVSGQVWSGSSGLCYINGTRCLDTANAITTTLDVGQLGKKWYPFKTSTDFTTAVGVNVNIATPLVPARLIIAMLDGSSSTAVSTGRLYVSYTIQLIEPTALALNN</sequence>
<gene>
    <name type="ORF">ORF3</name>
</gene>
<keyword id="KW-0167">Capsid protein</keyword>
<keyword id="KW-1015">Disulfide bond</keyword>
<keyword id="KW-1185">Reference proteome</keyword>
<keyword id="KW-0694">RNA-binding</keyword>
<keyword id="KW-1142">T=3 icosahedral capsid protein</keyword>
<keyword id="KW-0946">Virion</keyword>
<organismHost>
    <name type="scientific">Glycine max</name>
    <name type="common">Soybean</name>
    <name type="synonym">Glycine hispida</name>
    <dbReference type="NCBI Taxonomy" id="3847"/>
</organismHost>
<organismHost>
    <name type="scientific">Phaseolus vulgaris</name>
    <name type="common">Kidney bean</name>
    <name type="synonym">French bean</name>
    <dbReference type="NCBI Taxonomy" id="3885"/>
</organismHost>
<organismHost>
    <name type="scientific">Vigna mungo</name>
    <name type="common">Black gram</name>
    <name type="synonym">Phaseolus mungo</name>
    <dbReference type="NCBI Taxonomy" id="3915"/>
</organismHost>
<organismHost>
    <name type="scientific">Vigna unguiculata</name>
    <name type="common">Cowpea</name>
    <dbReference type="NCBI Taxonomy" id="3917"/>
</organismHost>
<evidence type="ECO:0000250" key="1"/>
<evidence type="ECO:0000256" key="2">
    <source>
        <dbReference type="SAM" id="MobiDB-lite"/>
    </source>
</evidence>
<evidence type="ECO:0000305" key="3"/>
<proteinExistence type="inferred from homology"/>
<dbReference type="EMBL" id="AF055887">
    <property type="protein sequence ID" value="AAC15985.1"/>
    <property type="molecule type" value="Genomic_RNA"/>
</dbReference>
<dbReference type="SMR" id="O72158"/>
<dbReference type="Proteomes" id="UP000001671">
    <property type="component" value="Segment"/>
</dbReference>
<dbReference type="GO" id="GO:0039617">
    <property type="term" value="C:T=3 icosahedral viral capsid"/>
    <property type="evidence" value="ECO:0007669"/>
    <property type="project" value="UniProtKB-KW"/>
</dbReference>
<dbReference type="GO" id="GO:0003723">
    <property type="term" value="F:RNA binding"/>
    <property type="evidence" value="ECO:0007669"/>
    <property type="project" value="UniProtKB-KW"/>
</dbReference>
<dbReference type="GO" id="GO:0005198">
    <property type="term" value="F:structural molecule activity"/>
    <property type="evidence" value="ECO:0007669"/>
    <property type="project" value="InterPro"/>
</dbReference>
<dbReference type="Gene3D" id="2.60.120.20">
    <property type="match status" value="1"/>
</dbReference>
<dbReference type="InterPro" id="IPR000937">
    <property type="entry name" value="Capsid_prot_S-dom_vir"/>
</dbReference>
<dbReference type="InterPro" id="IPR029053">
    <property type="entry name" value="Viral_coat"/>
</dbReference>
<dbReference type="Pfam" id="PF00729">
    <property type="entry name" value="Viral_coat"/>
    <property type="match status" value="1"/>
</dbReference>
<dbReference type="PRINTS" id="PR00233">
    <property type="entry name" value="ICOSAHEDRAL"/>
</dbReference>
<dbReference type="SUPFAM" id="SSF88633">
    <property type="entry name" value="Positive stranded ssRNA viruses"/>
    <property type="match status" value="1"/>
</dbReference>
<dbReference type="PROSITE" id="PS00555">
    <property type="entry name" value="ICOSAH_VIR_COAT_S"/>
    <property type="match status" value="1"/>
</dbReference>
<protein>
    <recommendedName>
        <fullName>Capsid protein</fullName>
        <shortName>CP</shortName>
    </recommendedName>
    <alternativeName>
        <fullName>Coat protein</fullName>
    </alternativeName>
</protein>
<accession>O72158</accession>
<reference key="1">
    <citation type="journal article" date="1998" name="Arch. Virol.">
        <title>Nucleotide sequence of a resistance breaking mutant of southern bean mosaic virus.</title>
        <authorList>
            <person name="Lee L."/>
            <person name="Anderson E.J."/>
        </authorList>
    </citation>
    <scope>NUCLEOTIDE SEQUENCE [GENOMIC RNA]</scope>
</reference>
<name>CAPSD_SBMVA</name>